<feature type="chain" id="PRO_0000083762" description="3-isopropylmalate dehydrogenase">
    <location>
        <begin position="1"/>
        <end position="345"/>
    </location>
</feature>
<feature type="binding site" evidence="1">
    <location>
        <position position="94"/>
    </location>
    <ligand>
        <name>substrate</name>
    </ligand>
</feature>
<feature type="binding site" evidence="1">
    <location>
        <position position="104"/>
    </location>
    <ligand>
        <name>substrate</name>
    </ligand>
</feature>
<feature type="binding site" evidence="1">
    <location>
        <position position="132"/>
    </location>
    <ligand>
        <name>substrate</name>
    </ligand>
</feature>
<feature type="binding site" evidence="1">
    <location>
        <position position="216"/>
    </location>
    <ligand>
        <name>Mg(2+)</name>
        <dbReference type="ChEBI" id="CHEBI:18420"/>
    </ligand>
</feature>
<feature type="binding site" evidence="1">
    <location>
        <position position="216"/>
    </location>
    <ligand>
        <name>substrate</name>
    </ligand>
</feature>
<feature type="binding site" evidence="1">
    <location>
        <position position="240"/>
    </location>
    <ligand>
        <name>Mg(2+)</name>
        <dbReference type="ChEBI" id="CHEBI:18420"/>
    </ligand>
</feature>
<feature type="binding site" evidence="1">
    <location>
        <position position="244"/>
    </location>
    <ligand>
        <name>Mg(2+)</name>
        <dbReference type="ChEBI" id="CHEBI:18420"/>
    </ligand>
</feature>
<feature type="binding site" evidence="1">
    <location>
        <begin position="274"/>
        <end position="286"/>
    </location>
    <ligand>
        <name>NAD(+)</name>
        <dbReference type="ChEBI" id="CHEBI:57540"/>
    </ligand>
</feature>
<feature type="site" description="Important for catalysis" evidence="1">
    <location>
        <position position="139"/>
    </location>
</feature>
<feature type="site" description="Important for catalysis" evidence="1">
    <location>
        <position position="184"/>
    </location>
</feature>
<sequence length="345" mass="37858">MAKKIVALVGDGIGPEIMEAGLEVLEALAEKTGFDYEIDRRPFGGADIDAAGPPLPDETLKASREADAILLVAIGSPQYDGVAVRPEQGLMALRKELNLYANIRPVKIFDSLKYLSPLKPERISGVDFVVVRELTGEIYFGDHILEERKARDINDYSYEEVERIIRKAFEIARNRRKIVTSIDKQNVLATSKLWRKVAEEVAQDFPDVTLEHQLVDSAAMLMITNPAKFDVIVTENLFGDILSDESSVLSGTLGVMPSASHSENGPSLYEPIHGSAPDIAGQGIANPISMILSVVMMLRDSFGRYEDTERIKRAVETSLAAGILTRDIGGQASTKEMMEAIIARL</sequence>
<accession>Q8DPJ4</accession>
<dbReference type="EC" id="1.1.1.85" evidence="1"/>
<dbReference type="EMBL" id="AE007317">
    <property type="protein sequence ID" value="AAK99938.1"/>
    <property type="molecule type" value="Genomic_DNA"/>
</dbReference>
<dbReference type="PIR" id="F98013">
    <property type="entry name" value="F98013"/>
</dbReference>
<dbReference type="RefSeq" id="NP_358728.1">
    <property type="nucleotide sequence ID" value="NC_003098.1"/>
</dbReference>
<dbReference type="RefSeq" id="WP_001074734.1">
    <property type="nucleotide sequence ID" value="NC_003098.1"/>
</dbReference>
<dbReference type="SMR" id="Q8DPJ4"/>
<dbReference type="STRING" id="171101.spr1135"/>
<dbReference type="KEGG" id="spr:spr1135"/>
<dbReference type="PATRIC" id="fig|171101.6.peg.1232"/>
<dbReference type="eggNOG" id="COG0473">
    <property type="taxonomic scope" value="Bacteria"/>
</dbReference>
<dbReference type="HOGENOM" id="CLU_031953_0_3_9"/>
<dbReference type="UniPathway" id="UPA00048">
    <property type="reaction ID" value="UER00072"/>
</dbReference>
<dbReference type="Proteomes" id="UP000000586">
    <property type="component" value="Chromosome"/>
</dbReference>
<dbReference type="GO" id="GO:0005829">
    <property type="term" value="C:cytosol"/>
    <property type="evidence" value="ECO:0000318"/>
    <property type="project" value="GO_Central"/>
</dbReference>
<dbReference type="GO" id="GO:0003862">
    <property type="term" value="F:3-isopropylmalate dehydrogenase activity"/>
    <property type="evidence" value="ECO:0000318"/>
    <property type="project" value="GO_Central"/>
</dbReference>
<dbReference type="GO" id="GO:0000287">
    <property type="term" value="F:magnesium ion binding"/>
    <property type="evidence" value="ECO:0007669"/>
    <property type="project" value="InterPro"/>
</dbReference>
<dbReference type="GO" id="GO:0051287">
    <property type="term" value="F:NAD binding"/>
    <property type="evidence" value="ECO:0007669"/>
    <property type="project" value="InterPro"/>
</dbReference>
<dbReference type="GO" id="GO:0009098">
    <property type="term" value="P:L-leucine biosynthetic process"/>
    <property type="evidence" value="ECO:0000318"/>
    <property type="project" value="GO_Central"/>
</dbReference>
<dbReference type="FunFam" id="3.40.718.10:FF:000006">
    <property type="entry name" value="3-isopropylmalate dehydrogenase"/>
    <property type="match status" value="1"/>
</dbReference>
<dbReference type="Gene3D" id="3.40.718.10">
    <property type="entry name" value="Isopropylmalate Dehydrogenase"/>
    <property type="match status" value="1"/>
</dbReference>
<dbReference type="HAMAP" id="MF_01033">
    <property type="entry name" value="LeuB_type1"/>
    <property type="match status" value="1"/>
</dbReference>
<dbReference type="InterPro" id="IPR019818">
    <property type="entry name" value="IsoCit/isopropylmalate_DH_CS"/>
</dbReference>
<dbReference type="InterPro" id="IPR024084">
    <property type="entry name" value="IsoPropMal-DH-like_dom"/>
</dbReference>
<dbReference type="InterPro" id="IPR004429">
    <property type="entry name" value="Isopropylmalate_DH"/>
</dbReference>
<dbReference type="NCBIfam" id="TIGR00169">
    <property type="entry name" value="leuB"/>
    <property type="match status" value="1"/>
</dbReference>
<dbReference type="PANTHER" id="PTHR42979">
    <property type="entry name" value="3-ISOPROPYLMALATE DEHYDROGENASE"/>
    <property type="match status" value="1"/>
</dbReference>
<dbReference type="PANTHER" id="PTHR42979:SF1">
    <property type="entry name" value="3-ISOPROPYLMALATE DEHYDROGENASE"/>
    <property type="match status" value="1"/>
</dbReference>
<dbReference type="Pfam" id="PF00180">
    <property type="entry name" value="Iso_dh"/>
    <property type="match status" value="1"/>
</dbReference>
<dbReference type="SMART" id="SM01329">
    <property type="entry name" value="Iso_dh"/>
    <property type="match status" value="1"/>
</dbReference>
<dbReference type="SUPFAM" id="SSF53659">
    <property type="entry name" value="Isocitrate/Isopropylmalate dehydrogenase-like"/>
    <property type="match status" value="1"/>
</dbReference>
<dbReference type="PROSITE" id="PS00470">
    <property type="entry name" value="IDH_IMDH"/>
    <property type="match status" value="1"/>
</dbReference>
<proteinExistence type="inferred from homology"/>
<reference key="1">
    <citation type="journal article" date="2001" name="J. Bacteriol.">
        <title>Genome of the bacterium Streptococcus pneumoniae strain R6.</title>
        <authorList>
            <person name="Hoskins J."/>
            <person name="Alborn W.E. Jr."/>
            <person name="Arnold J."/>
            <person name="Blaszczak L.C."/>
            <person name="Burgett S."/>
            <person name="DeHoff B.S."/>
            <person name="Estrem S.T."/>
            <person name="Fritz L."/>
            <person name="Fu D.-J."/>
            <person name="Fuller W."/>
            <person name="Geringer C."/>
            <person name="Gilmour R."/>
            <person name="Glass J.S."/>
            <person name="Khoja H."/>
            <person name="Kraft A.R."/>
            <person name="Lagace R.E."/>
            <person name="LeBlanc D.J."/>
            <person name="Lee L.N."/>
            <person name="Lefkowitz E.J."/>
            <person name="Lu J."/>
            <person name="Matsushima P."/>
            <person name="McAhren S.M."/>
            <person name="McHenney M."/>
            <person name="McLeaster K."/>
            <person name="Mundy C.W."/>
            <person name="Nicas T.I."/>
            <person name="Norris F.H."/>
            <person name="O'Gara M."/>
            <person name="Peery R.B."/>
            <person name="Robertson G.T."/>
            <person name="Rockey P."/>
            <person name="Sun P.-M."/>
            <person name="Winkler M.E."/>
            <person name="Yang Y."/>
            <person name="Young-Bellido M."/>
            <person name="Zhao G."/>
            <person name="Zook C.A."/>
            <person name="Baltz R.H."/>
            <person name="Jaskunas S.R."/>
            <person name="Rosteck P.R. Jr."/>
            <person name="Skatrud P.L."/>
            <person name="Glass J.I."/>
        </authorList>
    </citation>
    <scope>NUCLEOTIDE SEQUENCE [LARGE SCALE GENOMIC DNA]</scope>
    <source>
        <strain>ATCC BAA-255 / R6</strain>
    </source>
</reference>
<protein>
    <recommendedName>
        <fullName evidence="1">3-isopropylmalate dehydrogenase</fullName>
        <ecNumber evidence="1">1.1.1.85</ecNumber>
    </recommendedName>
    <alternativeName>
        <fullName evidence="1">3-IPM-DH</fullName>
    </alternativeName>
    <alternativeName>
        <fullName evidence="1">Beta-IPM dehydrogenase</fullName>
        <shortName evidence="1">IMDH</shortName>
    </alternativeName>
</protein>
<organism>
    <name type="scientific">Streptococcus pneumoniae (strain ATCC BAA-255 / R6)</name>
    <dbReference type="NCBI Taxonomy" id="171101"/>
    <lineage>
        <taxon>Bacteria</taxon>
        <taxon>Bacillati</taxon>
        <taxon>Bacillota</taxon>
        <taxon>Bacilli</taxon>
        <taxon>Lactobacillales</taxon>
        <taxon>Streptococcaceae</taxon>
        <taxon>Streptococcus</taxon>
    </lineage>
</organism>
<evidence type="ECO:0000255" key="1">
    <source>
        <dbReference type="HAMAP-Rule" id="MF_01033"/>
    </source>
</evidence>
<keyword id="KW-0028">Amino-acid biosynthesis</keyword>
<keyword id="KW-0100">Branched-chain amino acid biosynthesis</keyword>
<keyword id="KW-0963">Cytoplasm</keyword>
<keyword id="KW-0432">Leucine biosynthesis</keyword>
<keyword id="KW-0460">Magnesium</keyword>
<keyword id="KW-0464">Manganese</keyword>
<keyword id="KW-0479">Metal-binding</keyword>
<keyword id="KW-0520">NAD</keyword>
<keyword id="KW-0560">Oxidoreductase</keyword>
<keyword id="KW-1185">Reference proteome</keyword>
<name>LEU3_STRR6</name>
<comment type="function">
    <text evidence="1">Catalyzes the oxidation of 3-carboxy-2-hydroxy-4-methylpentanoate (3-isopropylmalate) to 3-carboxy-4-methyl-2-oxopentanoate. The product decarboxylates to 4-methyl-2 oxopentanoate.</text>
</comment>
<comment type="catalytic activity">
    <reaction evidence="1">
        <text>(2R,3S)-3-isopropylmalate + NAD(+) = 4-methyl-2-oxopentanoate + CO2 + NADH</text>
        <dbReference type="Rhea" id="RHEA:32271"/>
        <dbReference type="ChEBI" id="CHEBI:16526"/>
        <dbReference type="ChEBI" id="CHEBI:17865"/>
        <dbReference type="ChEBI" id="CHEBI:35121"/>
        <dbReference type="ChEBI" id="CHEBI:57540"/>
        <dbReference type="ChEBI" id="CHEBI:57945"/>
        <dbReference type="EC" id="1.1.1.85"/>
    </reaction>
</comment>
<comment type="cofactor">
    <cofactor evidence="1">
        <name>Mg(2+)</name>
        <dbReference type="ChEBI" id="CHEBI:18420"/>
    </cofactor>
    <cofactor evidence="1">
        <name>Mn(2+)</name>
        <dbReference type="ChEBI" id="CHEBI:29035"/>
    </cofactor>
    <text evidence="1">Binds 1 Mg(2+) or Mn(2+) ion per subunit.</text>
</comment>
<comment type="pathway">
    <text evidence="1">Amino-acid biosynthesis; L-leucine biosynthesis; L-leucine from 3-methyl-2-oxobutanoate: step 3/4.</text>
</comment>
<comment type="subunit">
    <text evidence="1">Homodimer.</text>
</comment>
<comment type="subcellular location">
    <subcellularLocation>
        <location evidence="1">Cytoplasm</location>
    </subcellularLocation>
</comment>
<comment type="similarity">
    <text evidence="1">Belongs to the isocitrate and isopropylmalate dehydrogenases family. LeuB type 1 subfamily.</text>
</comment>
<gene>
    <name evidence="1" type="primary">leuB</name>
    <name type="ordered locus">spr1135</name>
</gene>